<organism>
    <name type="scientific">Synechococcus sp. (strain ATCC 27144 / PCC 6301 / SAUG 1402/1)</name>
    <name type="common">Anacystis nidulans</name>
    <dbReference type="NCBI Taxonomy" id="269084"/>
    <lineage>
        <taxon>Bacteria</taxon>
        <taxon>Bacillati</taxon>
        <taxon>Cyanobacteriota</taxon>
        <taxon>Cyanophyceae</taxon>
        <taxon>Synechococcales</taxon>
        <taxon>Synechococcaceae</taxon>
        <taxon>Synechococcus</taxon>
    </lineage>
</organism>
<evidence type="ECO:0000255" key="1">
    <source>
        <dbReference type="HAMAP-Rule" id="MF_01849"/>
    </source>
</evidence>
<evidence type="ECO:0000255" key="2">
    <source>
        <dbReference type="PROSITE-ProRule" id="PRU01266"/>
    </source>
</evidence>
<protein>
    <recommendedName>
        <fullName evidence="1">Probable dual-specificity RNA methyltransferase RlmN</fullName>
        <ecNumber evidence="1">2.1.1.192</ecNumber>
    </recommendedName>
    <alternativeName>
        <fullName evidence="1">23S rRNA (adenine(2503)-C(2))-methyltransferase</fullName>
    </alternativeName>
    <alternativeName>
        <fullName evidence="1">23S rRNA m2A2503 methyltransferase</fullName>
    </alternativeName>
    <alternativeName>
        <fullName evidence="1">Ribosomal RNA large subunit methyltransferase N</fullName>
    </alternativeName>
    <alternativeName>
        <fullName evidence="1">tRNA (adenine(37)-C(2))-methyltransferase</fullName>
    </alternativeName>
    <alternativeName>
        <fullName evidence="1">tRNA m2A37 methyltransferase</fullName>
    </alternativeName>
</protein>
<proteinExistence type="inferred from homology"/>
<keyword id="KW-0004">4Fe-4S</keyword>
<keyword id="KW-0963">Cytoplasm</keyword>
<keyword id="KW-1015">Disulfide bond</keyword>
<keyword id="KW-0408">Iron</keyword>
<keyword id="KW-0411">Iron-sulfur</keyword>
<keyword id="KW-0479">Metal-binding</keyword>
<keyword id="KW-0489">Methyltransferase</keyword>
<keyword id="KW-0698">rRNA processing</keyword>
<keyword id="KW-0949">S-adenosyl-L-methionine</keyword>
<keyword id="KW-0808">Transferase</keyword>
<keyword id="KW-0819">tRNA processing</keyword>
<name>RLMN_SYNP6</name>
<dbReference type="EC" id="2.1.1.192" evidence="1"/>
<dbReference type="EMBL" id="AP008231">
    <property type="protein sequence ID" value="BAD80524.1"/>
    <property type="molecule type" value="Genomic_DNA"/>
</dbReference>
<dbReference type="RefSeq" id="WP_011244644.1">
    <property type="nucleotide sequence ID" value="NC_006576.1"/>
</dbReference>
<dbReference type="SMR" id="Q5MZJ6"/>
<dbReference type="KEGG" id="syc:syc2334_d"/>
<dbReference type="eggNOG" id="COG0820">
    <property type="taxonomic scope" value="Bacteria"/>
</dbReference>
<dbReference type="Proteomes" id="UP000001175">
    <property type="component" value="Chromosome"/>
</dbReference>
<dbReference type="GO" id="GO:0005737">
    <property type="term" value="C:cytoplasm"/>
    <property type="evidence" value="ECO:0007669"/>
    <property type="project" value="UniProtKB-SubCell"/>
</dbReference>
<dbReference type="GO" id="GO:0051539">
    <property type="term" value="F:4 iron, 4 sulfur cluster binding"/>
    <property type="evidence" value="ECO:0007669"/>
    <property type="project" value="UniProtKB-UniRule"/>
</dbReference>
<dbReference type="GO" id="GO:0046872">
    <property type="term" value="F:metal ion binding"/>
    <property type="evidence" value="ECO:0007669"/>
    <property type="project" value="UniProtKB-KW"/>
</dbReference>
<dbReference type="GO" id="GO:0070040">
    <property type="term" value="F:rRNA (adenine(2503)-C2-)-methyltransferase activity"/>
    <property type="evidence" value="ECO:0007669"/>
    <property type="project" value="UniProtKB-UniRule"/>
</dbReference>
<dbReference type="GO" id="GO:0019843">
    <property type="term" value="F:rRNA binding"/>
    <property type="evidence" value="ECO:0007669"/>
    <property type="project" value="UniProtKB-UniRule"/>
</dbReference>
<dbReference type="GO" id="GO:0002935">
    <property type="term" value="F:tRNA (adenine(37)-C2)-methyltransferase activity"/>
    <property type="evidence" value="ECO:0007669"/>
    <property type="project" value="UniProtKB-UniRule"/>
</dbReference>
<dbReference type="GO" id="GO:0000049">
    <property type="term" value="F:tRNA binding"/>
    <property type="evidence" value="ECO:0007669"/>
    <property type="project" value="UniProtKB-UniRule"/>
</dbReference>
<dbReference type="GO" id="GO:0070475">
    <property type="term" value="P:rRNA base methylation"/>
    <property type="evidence" value="ECO:0007669"/>
    <property type="project" value="UniProtKB-UniRule"/>
</dbReference>
<dbReference type="GO" id="GO:0030488">
    <property type="term" value="P:tRNA methylation"/>
    <property type="evidence" value="ECO:0007669"/>
    <property type="project" value="UniProtKB-UniRule"/>
</dbReference>
<dbReference type="CDD" id="cd01335">
    <property type="entry name" value="Radical_SAM"/>
    <property type="match status" value="1"/>
</dbReference>
<dbReference type="FunFam" id="3.20.20.70:FF:000014">
    <property type="entry name" value="Probable dual-specificity RNA methyltransferase RlmN"/>
    <property type="match status" value="1"/>
</dbReference>
<dbReference type="Gene3D" id="1.10.150.530">
    <property type="match status" value="1"/>
</dbReference>
<dbReference type="Gene3D" id="3.20.20.70">
    <property type="entry name" value="Aldolase class I"/>
    <property type="match status" value="1"/>
</dbReference>
<dbReference type="HAMAP" id="MF_01849">
    <property type="entry name" value="RNA_methyltr_RlmN"/>
    <property type="match status" value="1"/>
</dbReference>
<dbReference type="InterPro" id="IPR013785">
    <property type="entry name" value="Aldolase_TIM"/>
</dbReference>
<dbReference type="InterPro" id="IPR040072">
    <property type="entry name" value="Methyltransferase_A"/>
</dbReference>
<dbReference type="InterPro" id="IPR048641">
    <property type="entry name" value="RlmN_N"/>
</dbReference>
<dbReference type="InterPro" id="IPR027492">
    <property type="entry name" value="RNA_MTrfase_RlmN"/>
</dbReference>
<dbReference type="InterPro" id="IPR004383">
    <property type="entry name" value="rRNA_lsu_MTrfase_RlmN/Cfr"/>
</dbReference>
<dbReference type="InterPro" id="IPR007197">
    <property type="entry name" value="rSAM"/>
</dbReference>
<dbReference type="NCBIfam" id="TIGR00048">
    <property type="entry name" value="rRNA_mod_RlmN"/>
    <property type="match status" value="1"/>
</dbReference>
<dbReference type="PANTHER" id="PTHR30544">
    <property type="entry name" value="23S RRNA METHYLTRANSFERASE"/>
    <property type="match status" value="1"/>
</dbReference>
<dbReference type="PANTHER" id="PTHR30544:SF5">
    <property type="entry name" value="RADICAL SAM CORE DOMAIN-CONTAINING PROTEIN"/>
    <property type="match status" value="1"/>
</dbReference>
<dbReference type="Pfam" id="PF04055">
    <property type="entry name" value="Radical_SAM"/>
    <property type="match status" value="1"/>
</dbReference>
<dbReference type="Pfam" id="PF21016">
    <property type="entry name" value="RlmN_N"/>
    <property type="match status" value="1"/>
</dbReference>
<dbReference type="PIRSF" id="PIRSF006004">
    <property type="entry name" value="CHP00048"/>
    <property type="match status" value="1"/>
</dbReference>
<dbReference type="SFLD" id="SFLDF00275">
    <property type="entry name" value="adenosine_C2_methyltransferase"/>
    <property type="match status" value="1"/>
</dbReference>
<dbReference type="SFLD" id="SFLDS00029">
    <property type="entry name" value="Radical_SAM"/>
    <property type="match status" value="1"/>
</dbReference>
<dbReference type="SUPFAM" id="SSF102114">
    <property type="entry name" value="Radical SAM enzymes"/>
    <property type="match status" value="1"/>
</dbReference>
<dbReference type="PROSITE" id="PS51918">
    <property type="entry name" value="RADICAL_SAM"/>
    <property type="match status" value="1"/>
</dbReference>
<sequence>MTDATPLLGRSLPELQDWVVAQGQPSYRAKQLYQWLYERSIHNLAEISVFPKAWRQSLQAVPVGRSQIVDRSVSPSGSIKYLLRLHDGEIIEAVGIPSGDRLTVCVSSQLGCAMACDFCATGKGGFRRHLAPHEIIDQVLTVQEDWQQRVSNIVFMGMGEPLLNLDAVLAAIRCLNQDIGIGQRGITVSTVGIPGHIRRLAETKRVGDRPLQFTLAVSLHAPNQAIRDRLIPSSRHYPITDLLQECRDYVQITGRRVTFEYILLAGLNDQPEQAEQLAQLLRGFQSHVNLIPCNPIDEVEYQRPSKARVDAFADALRQQRVAVTVRWSKGLGADAACGQLRANRSTATLPA</sequence>
<feature type="chain" id="PRO_0000350481" description="Probable dual-specificity RNA methyltransferase RlmN">
    <location>
        <begin position="1"/>
        <end position="351"/>
    </location>
</feature>
<feature type="domain" description="Radical SAM core" evidence="2">
    <location>
        <begin position="98"/>
        <end position="334"/>
    </location>
</feature>
<feature type="active site" description="Proton acceptor" evidence="1">
    <location>
        <position position="92"/>
    </location>
</feature>
<feature type="active site" description="S-methylcysteine intermediate" evidence="1">
    <location>
        <position position="337"/>
    </location>
</feature>
<feature type="binding site" evidence="1">
    <location>
        <position position="112"/>
    </location>
    <ligand>
        <name>[4Fe-4S] cluster</name>
        <dbReference type="ChEBI" id="CHEBI:49883"/>
        <note>4Fe-4S-S-AdoMet</note>
    </ligand>
</feature>
<feature type="binding site" evidence="1">
    <location>
        <position position="116"/>
    </location>
    <ligand>
        <name>[4Fe-4S] cluster</name>
        <dbReference type="ChEBI" id="CHEBI:49883"/>
        <note>4Fe-4S-S-AdoMet</note>
    </ligand>
</feature>
<feature type="binding site" evidence="1">
    <location>
        <position position="119"/>
    </location>
    <ligand>
        <name>[4Fe-4S] cluster</name>
        <dbReference type="ChEBI" id="CHEBI:49883"/>
        <note>4Fe-4S-S-AdoMet</note>
    </ligand>
</feature>
<feature type="binding site" evidence="1">
    <location>
        <begin position="159"/>
        <end position="160"/>
    </location>
    <ligand>
        <name>S-adenosyl-L-methionine</name>
        <dbReference type="ChEBI" id="CHEBI:59789"/>
    </ligand>
</feature>
<feature type="binding site" evidence="1">
    <location>
        <position position="189"/>
    </location>
    <ligand>
        <name>S-adenosyl-L-methionine</name>
        <dbReference type="ChEBI" id="CHEBI:59789"/>
    </ligand>
</feature>
<feature type="binding site" evidence="1">
    <location>
        <begin position="218"/>
        <end position="220"/>
    </location>
    <ligand>
        <name>S-adenosyl-L-methionine</name>
        <dbReference type="ChEBI" id="CHEBI:59789"/>
    </ligand>
</feature>
<feature type="binding site" evidence="1">
    <location>
        <position position="294"/>
    </location>
    <ligand>
        <name>S-adenosyl-L-methionine</name>
        <dbReference type="ChEBI" id="CHEBI:59789"/>
    </ligand>
</feature>
<feature type="disulfide bond" description="(transient)" evidence="1">
    <location>
        <begin position="105"/>
        <end position="337"/>
    </location>
</feature>
<accession>Q5MZJ6</accession>
<comment type="function">
    <text evidence="1">Specifically methylates position 2 of adenine 2503 in 23S rRNA and position 2 of adenine 37 in tRNAs.</text>
</comment>
<comment type="catalytic activity">
    <reaction evidence="1">
        <text>adenosine(2503) in 23S rRNA + 2 reduced [2Fe-2S]-[ferredoxin] + 2 S-adenosyl-L-methionine = 2-methyladenosine(2503) in 23S rRNA + 5'-deoxyadenosine + L-methionine + 2 oxidized [2Fe-2S]-[ferredoxin] + S-adenosyl-L-homocysteine</text>
        <dbReference type="Rhea" id="RHEA:42916"/>
        <dbReference type="Rhea" id="RHEA-COMP:10000"/>
        <dbReference type="Rhea" id="RHEA-COMP:10001"/>
        <dbReference type="Rhea" id="RHEA-COMP:10152"/>
        <dbReference type="Rhea" id="RHEA-COMP:10282"/>
        <dbReference type="ChEBI" id="CHEBI:17319"/>
        <dbReference type="ChEBI" id="CHEBI:33737"/>
        <dbReference type="ChEBI" id="CHEBI:33738"/>
        <dbReference type="ChEBI" id="CHEBI:57844"/>
        <dbReference type="ChEBI" id="CHEBI:57856"/>
        <dbReference type="ChEBI" id="CHEBI:59789"/>
        <dbReference type="ChEBI" id="CHEBI:74411"/>
        <dbReference type="ChEBI" id="CHEBI:74497"/>
        <dbReference type="EC" id="2.1.1.192"/>
    </reaction>
</comment>
<comment type="catalytic activity">
    <reaction evidence="1">
        <text>adenosine(37) in tRNA + 2 reduced [2Fe-2S]-[ferredoxin] + 2 S-adenosyl-L-methionine = 2-methyladenosine(37) in tRNA + 5'-deoxyadenosine + L-methionine + 2 oxidized [2Fe-2S]-[ferredoxin] + S-adenosyl-L-homocysteine</text>
        <dbReference type="Rhea" id="RHEA:43332"/>
        <dbReference type="Rhea" id="RHEA-COMP:10000"/>
        <dbReference type="Rhea" id="RHEA-COMP:10001"/>
        <dbReference type="Rhea" id="RHEA-COMP:10162"/>
        <dbReference type="Rhea" id="RHEA-COMP:10485"/>
        <dbReference type="ChEBI" id="CHEBI:17319"/>
        <dbReference type="ChEBI" id="CHEBI:33737"/>
        <dbReference type="ChEBI" id="CHEBI:33738"/>
        <dbReference type="ChEBI" id="CHEBI:57844"/>
        <dbReference type="ChEBI" id="CHEBI:57856"/>
        <dbReference type="ChEBI" id="CHEBI:59789"/>
        <dbReference type="ChEBI" id="CHEBI:74411"/>
        <dbReference type="ChEBI" id="CHEBI:74497"/>
        <dbReference type="EC" id="2.1.1.192"/>
    </reaction>
</comment>
<comment type="cofactor">
    <cofactor evidence="1">
        <name>[4Fe-4S] cluster</name>
        <dbReference type="ChEBI" id="CHEBI:49883"/>
    </cofactor>
    <text evidence="1">Binds 1 [4Fe-4S] cluster. The cluster is coordinated with 3 cysteines and an exchangeable S-adenosyl-L-methionine.</text>
</comment>
<comment type="subcellular location">
    <subcellularLocation>
        <location evidence="1">Cytoplasm</location>
    </subcellularLocation>
</comment>
<comment type="miscellaneous">
    <text evidence="1">Reaction proceeds by a ping-pong mechanism involving intermediate methylation of a conserved cysteine residue.</text>
</comment>
<comment type="similarity">
    <text evidence="1">Belongs to the radical SAM superfamily. RlmN family.</text>
</comment>
<gene>
    <name evidence="1" type="primary">rlmN</name>
    <name type="ordered locus">syc2334_d</name>
</gene>
<reference key="1">
    <citation type="journal article" date="2007" name="Photosyn. Res.">
        <title>Complete nucleotide sequence of the freshwater unicellular cyanobacterium Synechococcus elongatus PCC 6301 chromosome: gene content and organization.</title>
        <authorList>
            <person name="Sugita C."/>
            <person name="Ogata K."/>
            <person name="Shikata M."/>
            <person name="Jikuya H."/>
            <person name="Takano J."/>
            <person name="Furumichi M."/>
            <person name="Kanehisa M."/>
            <person name="Omata T."/>
            <person name="Sugiura M."/>
            <person name="Sugita M."/>
        </authorList>
    </citation>
    <scope>NUCLEOTIDE SEQUENCE [LARGE SCALE GENOMIC DNA]</scope>
    <source>
        <strain>ATCC 27144 / PCC 6301 / SAUG 1402/1</strain>
    </source>
</reference>